<organism>
    <name type="scientific">Bordetella avium (strain 197N)</name>
    <dbReference type="NCBI Taxonomy" id="360910"/>
    <lineage>
        <taxon>Bacteria</taxon>
        <taxon>Pseudomonadati</taxon>
        <taxon>Pseudomonadota</taxon>
        <taxon>Betaproteobacteria</taxon>
        <taxon>Burkholderiales</taxon>
        <taxon>Alcaligenaceae</taxon>
        <taxon>Bordetella</taxon>
    </lineage>
</organism>
<accession>Q2L242</accession>
<proteinExistence type="inferred from homology"/>
<gene>
    <name evidence="1" type="primary">rpsD</name>
    <name type="ordered locus">BAV0059</name>
</gene>
<name>RS4_BORA1</name>
<evidence type="ECO:0000255" key="1">
    <source>
        <dbReference type="HAMAP-Rule" id="MF_01306"/>
    </source>
</evidence>
<evidence type="ECO:0000256" key="2">
    <source>
        <dbReference type="SAM" id="MobiDB-lite"/>
    </source>
</evidence>
<evidence type="ECO:0000305" key="3"/>
<reference key="1">
    <citation type="journal article" date="2006" name="J. Bacteriol.">
        <title>Comparison of the genome sequence of the poultry pathogen Bordetella avium with those of B. bronchiseptica, B. pertussis, and B. parapertussis reveals extensive diversity in surface structures associated with host interaction.</title>
        <authorList>
            <person name="Sebaihia M."/>
            <person name="Preston A."/>
            <person name="Maskell D.J."/>
            <person name="Kuzmiak H."/>
            <person name="Connell T.D."/>
            <person name="King N.D."/>
            <person name="Orndorff P.E."/>
            <person name="Miyamoto D.M."/>
            <person name="Thomson N.R."/>
            <person name="Harris D."/>
            <person name="Goble A."/>
            <person name="Lord A."/>
            <person name="Murphy L."/>
            <person name="Quail M.A."/>
            <person name="Rutter S."/>
            <person name="Squares R."/>
            <person name="Squares S."/>
            <person name="Woodward J."/>
            <person name="Parkhill J."/>
            <person name="Temple L.M."/>
        </authorList>
    </citation>
    <scope>NUCLEOTIDE SEQUENCE [LARGE SCALE GENOMIC DNA]</scope>
    <source>
        <strain>197N</strain>
    </source>
</reference>
<feature type="chain" id="PRO_0000293247" description="Small ribosomal subunit protein uS4">
    <location>
        <begin position="1"/>
        <end position="207"/>
    </location>
</feature>
<feature type="domain" description="S4 RNA-binding" evidence="1">
    <location>
        <begin position="97"/>
        <end position="160"/>
    </location>
</feature>
<feature type="region of interest" description="Disordered" evidence="2">
    <location>
        <begin position="31"/>
        <end position="51"/>
    </location>
</feature>
<protein>
    <recommendedName>
        <fullName evidence="1">Small ribosomal subunit protein uS4</fullName>
    </recommendedName>
    <alternativeName>
        <fullName evidence="3">30S ribosomal protein S4</fullName>
    </alternativeName>
</protein>
<comment type="function">
    <text evidence="1">One of the primary rRNA binding proteins, it binds directly to 16S rRNA where it nucleates assembly of the body of the 30S subunit.</text>
</comment>
<comment type="function">
    <text evidence="1">With S5 and S12 plays an important role in translational accuracy.</text>
</comment>
<comment type="subunit">
    <text evidence="1">Part of the 30S ribosomal subunit. Contacts protein S5. The interaction surface between S4 and S5 is involved in control of translational fidelity.</text>
</comment>
<comment type="similarity">
    <text evidence="1">Belongs to the universal ribosomal protein uS4 family.</text>
</comment>
<keyword id="KW-1185">Reference proteome</keyword>
<keyword id="KW-0687">Ribonucleoprotein</keyword>
<keyword id="KW-0689">Ribosomal protein</keyword>
<keyword id="KW-0694">RNA-binding</keyword>
<keyword id="KW-0699">rRNA-binding</keyword>
<dbReference type="EMBL" id="AM167904">
    <property type="protein sequence ID" value="CAJ47643.1"/>
    <property type="molecule type" value="Genomic_DNA"/>
</dbReference>
<dbReference type="RefSeq" id="WP_012415762.1">
    <property type="nucleotide sequence ID" value="NC_010645.1"/>
</dbReference>
<dbReference type="SMR" id="Q2L242"/>
<dbReference type="STRING" id="360910.BAV0059"/>
<dbReference type="GeneID" id="92936696"/>
<dbReference type="KEGG" id="bav:BAV0059"/>
<dbReference type="eggNOG" id="COG0522">
    <property type="taxonomic scope" value="Bacteria"/>
</dbReference>
<dbReference type="HOGENOM" id="CLU_092403_0_2_4"/>
<dbReference type="OrthoDB" id="9803672at2"/>
<dbReference type="Proteomes" id="UP000001977">
    <property type="component" value="Chromosome"/>
</dbReference>
<dbReference type="GO" id="GO:0015935">
    <property type="term" value="C:small ribosomal subunit"/>
    <property type="evidence" value="ECO:0007669"/>
    <property type="project" value="InterPro"/>
</dbReference>
<dbReference type="GO" id="GO:0019843">
    <property type="term" value="F:rRNA binding"/>
    <property type="evidence" value="ECO:0007669"/>
    <property type="project" value="UniProtKB-UniRule"/>
</dbReference>
<dbReference type="GO" id="GO:0003735">
    <property type="term" value="F:structural constituent of ribosome"/>
    <property type="evidence" value="ECO:0007669"/>
    <property type="project" value="InterPro"/>
</dbReference>
<dbReference type="GO" id="GO:0042274">
    <property type="term" value="P:ribosomal small subunit biogenesis"/>
    <property type="evidence" value="ECO:0007669"/>
    <property type="project" value="TreeGrafter"/>
</dbReference>
<dbReference type="GO" id="GO:0006412">
    <property type="term" value="P:translation"/>
    <property type="evidence" value="ECO:0007669"/>
    <property type="project" value="UniProtKB-UniRule"/>
</dbReference>
<dbReference type="CDD" id="cd00165">
    <property type="entry name" value="S4"/>
    <property type="match status" value="1"/>
</dbReference>
<dbReference type="FunFam" id="1.10.1050.10:FF:000001">
    <property type="entry name" value="30S ribosomal protein S4"/>
    <property type="match status" value="1"/>
</dbReference>
<dbReference type="FunFam" id="3.10.290.10:FF:000001">
    <property type="entry name" value="30S ribosomal protein S4"/>
    <property type="match status" value="1"/>
</dbReference>
<dbReference type="Gene3D" id="1.10.1050.10">
    <property type="entry name" value="Ribosomal Protein S4 Delta 41, Chain A, domain 1"/>
    <property type="match status" value="1"/>
</dbReference>
<dbReference type="Gene3D" id="3.10.290.10">
    <property type="entry name" value="RNA-binding S4 domain"/>
    <property type="match status" value="1"/>
</dbReference>
<dbReference type="HAMAP" id="MF_01306_B">
    <property type="entry name" value="Ribosomal_uS4_B"/>
    <property type="match status" value="1"/>
</dbReference>
<dbReference type="InterPro" id="IPR022801">
    <property type="entry name" value="Ribosomal_uS4"/>
</dbReference>
<dbReference type="InterPro" id="IPR005709">
    <property type="entry name" value="Ribosomal_uS4_bac-type"/>
</dbReference>
<dbReference type="InterPro" id="IPR018079">
    <property type="entry name" value="Ribosomal_uS4_CS"/>
</dbReference>
<dbReference type="InterPro" id="IPR001912">
    <property type="entry name" value="Ribosomal_uS4_N"/>
</dbReference>
<dbReference type="InterPro" id="IPR002942">
    <property type="entry name" value="S4_RNA-bd"/>
</dbReference>
<dbReference type="InterPro" id="IPR036986">
    <property type="entry name" value="S4_RNA-bd_sf"/>
</dbReference>
<dbReference type="NCBIfam" id="NF003717">
    <property type="entry name" value="PRK05327.1"/>
    <property type="match status" value="1"/>
</dbReference>
<dbReference type="NCBIfam" id="TIGR01017">
    <property type="entry name" value="rpsD_bact"/>
    <property type="match status" value="1"/>
</dbReference>
<dbReference type="PANTHER" id="PTHR11831">
    <property type="entry name" value="30S 40S RIBOSOMAL PROTEIN"/>
    <property type="match status" value="1"/>
</dbReference>
<dbReference type="PANTHER" id="PTHR11831:SF4">
    <property type="entry name" value="SMALL RIBOSOMAL SUBUNIT PROTEIN US4M"/>
    <property type="match status" value="1"/>
</dbReference>
<dbReference type="Pfam" id="PF00163">
    <property type="entry name" value="Ribosomal_S4"/>
    <property type="match status" value="1"/>
</dbReference>
<dbReference type="Pfam" id="PF01479">
    <property type="entry name" value="S4"/>
    <property type="match status" value="1"/>
</dbReference>
<dbReference type="SMART" id="SM01390">
    <property type="entry name" value="Ribosomal_S4"/>
    <property type="match status" value="1"/>
</dbReference>
<dbReference type="SMART" id="SM00363">
    <property type="entry name" value="S4"/>
    <property type="match status" value="1"/>
</dbReference>
<dbReference type="SUPFAM" id="SSF55174">
    <property type="entry name" value="Alpha-L RNA-binding motif"/>
    <property type="match status" value="1"/>
</dbReference>
<dbReference type="PROSITE" id="PS00632">
    <property type="entry name" value="RIBOSOMAL_S4"/>
    <property type="match status" value="1"/>
</dbReference>
<dbReference type="PROSITE" id="PS50889">
    <property type="entry name" value="S4"/>
    <property type="match status" value="1"/>
</dbReference>
<sequence>MARYTGPKCKLSRREGTDLFLKSARRSLDSKCKLDSKPGQHGRTSGARTSDYGLQLREKQKLKRMYGVLEKQFRKYFAEAERRRGNTGETLIQLLESRLDNVVYRMGFGSTRAEARQLVSHRAIELNGHTADIASMLVKAGDVITVREGAKKQARIRESLDLAASIGIPQWVEVDSNKMTGTFKSPPDRADVARDVNESMVVELYSR</sequence>